<evidence type="ECO:0000255" key="1">
    <source>
        <dbReference type="HAMAP-Rule" id="MF_00021"/>
    </source>
</evidence>
<comment type="function">
    <text evidence="1">Catalyzes the ATP-dependent transfer of a sulfur to tRNA to produce 4-thiouridine in position 8 of tRNAs, which functions as a near-UV photosensor. Also catalyzes the transfer of sulfur to the sulfur carrier protein ThiS, forming ThiS-thiocarboxylate. This is a step in the synthesis of thiazole, in the thiamine biosynthesis pathway. The sulfur is donated as persulfide by IscS.</text>
</comment>
<comment type="catalytic activity">
    <reaction evidence="1">
        <text>[ThiI sulfur-carrier protein]-S-sulfanyl-L-cysteine + a uridine in tRNA + 2 reduced [2Fe-2S]-[ferredoxin] + ATP + H(+) = [ThiI sulfur-carrier protein]-L-cysteine + a 4-thiouridine in tRNA + 2 oxidized [2Fe-2S]-[ferredoxin] + AMP + diphosphate</text>
        <dbReference type="Rhea" id="RHEA:24176"/>
        <dbReference type="Rhea" id="RHEA-COMP:10000"/>
        <dbReference type="Rhea" id="RHEA-COMP:10001"/>
        <dbReference type="Rhea" id="RHEA-COMP:13337"/>
        <dbReference type="Rhea" id="RHEA-COMP:13338"/>
        <dbReference type="Rhea" id="RHEA-COMP:13339"/>
        <dbReference type="Rhea" id="RHEA-COMP:13340"/>
        <dbReference type="ChEBI" id="CHEBI:15378"/>
        <dbReference type="ChEBI" id="CHEBI:29950"/>
        <dbReference type="ChEBI" id="CHEBI:30616"/>
        <dbReference type="ChEBI" id="CHEBI:33019"/>
        <dbReference type="ChEBI" id="CHEBI:33737"/>
        <dbReference type="ChEBI" id="CHEBI:33738"/>
        <dbReference type="ChEBI" id="CHEBI:61963"/>
        <dbReference type="ChEBI" id="CHEBI:65315"/>
        <dbReference type="ChEBI" id="CHEBI:136798"/>
        <dbReference type="ChEBI" id="CHEBI:456215"/>
        <dbReference type="EC" id="2.8.1.4"/>
    </reaction>
</comment>
<comment type="catalytic activity">
    <reaction evidence="1">
        <text>[ThiS sulfur-carrier protein]-C-terminal Gly-Gly-AMP + S-sulfanyl-L-cysteinyl-[cysteine desulfurase] + AH2 = [ThiS sulfur-carrier protein]-C-terminal-Gly-aminoethanethioate + L-cysteinyl-[cysteine desulfurase] + A + AMP + 2 H(+)</text>
        <dbReference type="Rhea" id="RHEA:43340"/>
        <dbReference type="Rhea" id="RHEA-COMP:12157"/>
        <dbReference type="Rhea" id="RHEA-COMP:12158"/>
        <dbReference type="Rhea" id="RHEA-COMP:12910"/>
        <dbReference type="Rhea" id="RHEA-COMP:19908"/>
        <dbReference type="ChEBI" id="CHEBI:13193"/>
        <dbReference type="ChEBI" id="CHEBI:15378"/>
        <dbReference type="ChEBI" id="CHEBI:17499"/>
        <dbReference type="ChEBI" id="CHEBI:29950"/>
        <dbReference type="ChEBI" id="CHEBI:61963"/>
        <dbReference type="ChEBI" id="CHEBI:90618"/>
        <dbReference type="ChEBI" id="CHEBI:232372"/>
        <dbReference type="ChEBI" id="CHEBI:456215"/>
    </reaction>
</comment>
<comment type="pathway">
    <text evidence="1">Cofactor biosynthesis; thiamine diphosphate biosynthesis.</text>
</comment>
<comment type="subcellular location">
    <subcellularLocation>
        <location evidence="1">Cytoplasm</location>
    </subcellularLocation>
</comment>
<comment type="similarity">
    <text evidence="1">Belongs to the ThiI family.</text>
</comment>
<reference key="1">
    <citation type="journal article" date="2008" name="J. Bacteriol.">
        <title>Insights into the environmental resistance gene pool from the genome sequence of the multidrug-resistant environmental isolate Escherichia coli SMS-3-5.</title>
        <authorList>
            <person name="Fricke W.F."/>
            <person name="Wright M.S."/>
            <person name="Lindell A.H."/>
            <person name="Harkins D.M."/>
            <person name="Baker-Austin C."/>
            <person name="Ravel J."/>
            <person name="Stepanauskas R."/>
        </authorList>
    </citation>
    <scope>NUCLEOTIDE SEQUENCE [LARGE SCALE GENOMIC DNA]</scope>
    <source>
        <strain>SMS-3-5 / SECEC</strain>
    </source>
</reference>
<protein>
    <recommendedName>
        <fullName evidence="1">tRNA sulfurtransferase</fullName>
        <ecNumber evidence="1">2.8.1.4</ecNumber>
    </recommendedName>
    <alternativeName>
        <fullName evidence="1">Sulfur carrier protein ThiS sulfurtransferase</fullName>
    </alternativeName>
    <alternativeName>
        <fullName evidence="1">Thiamine biosynthesis protein ThiI</fullName>
    </alternativeName>
    <alternativeName>
        <fullName evidence="1">tRNA 4-thiouridine synthase</fullName>
    </alternativeName>
</protein>
<sequence>MKFIIKLFPEITIKSQSVRLRFIKILTGNIRNVLKHYDETLAVVRHWDNIEVRAKDENQRLAIRDALTRIPGIHHILEVEDVPFTDMHDIFEKALVQYRDQLEGKTFCVRVKRRGKHDFSSIDVERYVGGGLNQHIESARVKLTNPDVTVHLEVEDDRLLLIKGRYEGIGGFPIGTQEDVLSLISGGFDSGVSSYMLMRRGCRVHYCFFNLGGAAHEIGVRQVAHYLWNRFGSSHRVRFVAINFEPVVGEILEKIDDGQMGVILKRMMVRAASKVAERYGVQALVTGEALGQVSSQTLTNLRLIDNVSDTLILRPLISYDKEHIINLARQIGTEDFARTMPEYCGVISKSPTVKAVKSKIEAEEEKFDFSILDKVVEEANNVDIREIAQQTEQEVVEVETVNGFGPNDVILDIRSIDEQEDKPLKVEGIDVVSLPFYKLSTKFGDLDQSKTWLLWCERGVMSRLQALYLREQGFNNVKVYRP</sequence>
<gene>
    <name evidence="1" type="primary">thiI</name>
    <name type="ordered locus">EcSMS35_0459</name>
</gene>
<organism>
    <name type="scientific">Escherichia coli (strain SMS-3-5 / SECEC)</name>
    <dbReference type="NCBI Taxonomy" id="439855"/>
    <lineage>
        <taxon>Bacteria</taxon>
        <taxon>Pseudomonadati</taxon>
        <taxon>Pseudomonadota</taxon>
        <taxon>Gammaproteobacteria</taxon>
        <taxon>Enterobacterales</taxon>
        <taxon>Enterobacteriaceae</taxon>
        <taxon>Escherichia</taxon>
    </lineage>
</organism>
<keyword id="KW-0067">ATP-binding</keyword>
<keyword id="KW-0963">Cytoplasm</keyword>
<keyword id="KW-1015">Disulfide bond</keyword>
<keyword id="KW-0547">Nucleotide-binding</keyword>
<keyword id="KW-0676">Redox-active center</keyword>
<keyword id="KW-0694">RNA-binding</keyword>
<keyword id="KW-0784">Thiamine biosynthesis</keyword>
<keyword id="KW-0808">Transferase</keyword>
<keyword id="KW-0820">tRNA-binding</keyword>
<feature type="chain" id="PRO_1000116404" description="tRNA sulfurtransferase">
    <location>
        <begin position="1"/>
        <end position="482"/>
    </location>
</feature>
<feature type="domain" description="THUMP" evidence="1">
    <location>
        <begin position="61"/>
        <end position="165"/>
    </location>
</feature>
<feature type="domain" description="Rhodanese" evidence="1">
    <location>
        <begin position="404"/>
        <end position="482"/>
    </location>
</feature>
<feature type="active site" description="Cysteine persulfide intermediate" evidence="1">
    <location>
        <position position="456"/>
    </location>
</feature>
<feature type="binding site" evidence="1">
    <location>
        <begin position="183"/>
        <end position="184"/>
    </location>
    <ligand>
        <name>ATP</name>
        <dbReference type="ChEBI" id="CHEBI:30616"/>
    </ligand>
</feature>
<feature type="binding site" evidence="1">
    <location>
        <position position="265"/>
    </location>
    <ligand>
        <name>ATP</name>
        <dbReference type="ChEBI" id="CHEBI:30616"/>
    </ligand>
</feature>
<feature type="binding site" evidence="1">
    <location>
        <position position="287"/>
    </location>
    <ligand>
        <name>ATP</name>
        <dbReference type="ChEBI" id="CHEBI:30616"/>
    </ligand>
</feature>
<feature type="binding site" evidence="1">
    <location>
        <position position="296"/>
    </location>
    <ligand>
        <name>ATP</name>
        <dbReference type="ChEBI" id="CHEBI:30616"/>
    </ligand>
</feature>
<feature type="disulfide bond" description="Redox-active" evidence="1">
    <location>
        <begin position="344"/>
        <end position="456"/>
    </location>
</feature>
<proteinExistence type="inferred from homology"/>
<accession>B1LJH3</accession>
<dbReference type="EC" id="2.8.1.4" evidence="1"/>
<dbReference type="EMBL" id="CP000970">
    <property type="protein sequence ID" value="ACB15856.1"/>
    <property type="molecule type" value="Genomic_DNA"/>
</dbReference>
<dbReference type="RefSeq" id="WP_000668665.1">
    <property type="nucleotide sequence ID" value="NC_010498.1"/>
</dbReference>
<dbReference type="SMR" id="B1LJH3"/>
<dbReference type="KEGG" id="ecm:EcSMS35_0459"/>
<dbReference type="HOGENOM" id="CLU_037952_4_1_6"/>
<dbReference type="UniPathway" id="UPA00060"/>
<dbReference type="Proteomes" id="UP000007011">
    <property type="component" value="Chromosome"/>
</dbReference>
<dbReference type="GO" id="GO:0005829">
    <property type="term" value="C:cytosol"/>
    <property type="evidence" value="ECO:0007669"/>
    <property type="project" value="TreeGrafter"/>
</dbReference>
<dbReference type="GO" id="GO:0005524">
    <property type="term" value="F:ATP binding"/>
    <property type="evidence" value="ECO:0007669"/>
    <property type="project" value="UniProtKB-UniRule"/>
</dbReference>
<dbReference type="GO" id="GO:0004810">
    <property type="term" value="F:CCA tRNA nucleotidyltransferase activity"/>
    <property type="evidence" value="ECO:0007669"/>
    <property type="project" value="InterPro"/>
</dbReference>
<dbReference type="GO" id="GO:0000049">
    <property type="term" value="F:tRNA binding"/>
    <property type="evidence" value="ECO:0007669"/>
    <property type="project" value="UniProtKB-UniRule"/>
</dbReference>
<dbReference type="GO" id="GO:0140741">
    <property type="term" value="F:tRNA-uracil-4 sulfurtransferase activity"/>
    <property type="evidence" value="ECO:0007669"/>
    <property type="project" value="UniProtKB-EC"/>
</dbReference>
<dbReference type="GO" id="GO:0009228">
    <property type="term" value="P:thiamine biosynthetic process"/>
    <property type="evidence" value="ECO:0007669"/>
    <property type="project" value="UniProtKB-KW"/>
</dbReference>
<dbReference type="GO" id="GO:0009229">
    <property type="term" value="P:thiamine diphosphate biosynthetic process"/>
    <property type="evidence" value="ECO:0007669"/>
    <property type="project" value="UniProtKB-UniRule"/>
</dbReference>
<dbReference type="GO" id="GO:0052837">
    <property type="term" value="P:thiazole biosynthetic process"/>
    <property type="evidence" value="ECO:0007669"/>
    <property type="project" value="InterPro"/>
</dbReference>
<dbReference type="GO" id="GO:0002937">
    <property type="term" value="P:tRNA 4-thiouridine biosynthesis"/>
    <property type="evidence" value="ECO:0007669"/>
    <property type="project" value="TreeGrafter"/>
</dbReference>
<dbReference type="CDD" id="cd01712">
    <property type="entry name" value="PPase_ThiI"/>
    <property type="match status" value="1"/>
</dbReference>
<dbReference type="CDD" id="cd00158">
    <property type="entry name" value="RHOD"/>
    <property type="match status" value="1"/>
</dbReference>
<dbReference type="CDD" id="cd11716">
    <property type="entry name" value="THUMP_ThiI"/>
    <property type="match status" value="1"/>
</dbReference>
<dbReference type="FunFam" id="3.30.2130.30:FF:000002">
    <property type="entry name" value="tRNA sulfurtransferase"/>
    <property type="match status" value="1"/>
</dbReference>
<dbReference type="FunFam" id="3.40.250.10:FF:000003">
    <property type="entry name" value="tRNA sulfurtransferase"/>
    <property type="match status" value="1"/>
</dbReference>
<dbReference type="FunFam" id="3.40.50.620:FF:000029">
    <property type="entry name" value="tRNA sulfurtransferase"/>
    <property type="match status" value="1"/>
</dbReference>
<dbReference type="Gene3D" id="3.30.2130.30">
    <property type="match status" value="1"/>
</dbReference>
<dbReference type="Gene3D" id="3.40.50.620">
    <property type="entry name" value="HUPs"/>
    <property type="match status" value="1"/>
</dbReference>
<dbReference type="Gene3D" id="3.40.250.10">
    <property type="entry name" value="Rhodanese-like domain"/>
    <property type="match status" value="1"/>
</dbReference>
<dbReference type="HAMAP" id="MF_00021">
    <property type="entry name" value="ThiI"/>
    <property type="match status" value="1"/>
</dbReference>
<dbReference type="InterPro" id="IPR001763">
    <property type="entry name" value="Rhodanese-like_dom"/>
</dbReference>
<dbReference type="InterPro" id="IPR036873">
    <property type="entry name" value="Rhodanese-like_dom_sf"/>
</dbReference>
<dbReference type="InterPro" id="IPR014729">
    <property type="entry name" value="Rossmann-like_a/b/a_fold"/>
</dbReference>
<dbReference type="InterPro" id="IPR020536">
    <property type="entry name" value="ThiI_AANH"/>
</dbReference>
<dbReference type="InterPro" id="IPR054173">
    <property type="entry name" value="ThiI_fer"/>
</dbReference>
<dbReference type="InterPro" id="IPR049961">
    <property type="entry name" value="ThiI_N"/>
</dbReference>
<dbReference type="InterPro" id="IPR026340">
    <property type="entry name" value="THII_Thiazole_biosynth_dom"/>
</dbReference>
<dbReference type="InterPro" id="IPR004114">
    <property type="entry name" value="THUMP_dom"/>
</dbReference>
<dbReference type="InterPro" id="IPR049962">
    <property type="entry name" value="THUMP_ThiI"/>
</dbReference>
<dbReference type="InterPro" id="IPR003720">
    <property type="entry name" value="tRNA_STrfase"/>
</dbReference>
<dbReference type="InterPro" id="IPR050102">
    <property type="entry name" value="tRNA_sulfurtransferase_ThiI"/>
</dbReference>
<dbReference type="NCBIfam" id="TIGR04271">
    <property type="entry name" value="ThiI_C_thiazole"/>
    <property type="match status" value="1"/>
</dbReference>
<dbReference type="NCBIfam" id="TIGR00342">
    <property type="entry name" value="tRNA uracil 4-sulfurtransferase ThiI"/>
    <property type="match status" value="1"/>
</dbReference>
<dbReference type="PANTHER" id="PTHR43209">
    <property type="entry name" value="TRNA SULFURTRANSFERASE"/>
    <property type="match status" value="1"/>
</dbReference>
<dbReference type="PANTHER" id="PTHR43209:SF1">
    <property type="entry name" value="TRNA SULFURTRANSFERASE"/>
    <property type="match status" value="1"/>
</dbReference>
<dbReference type="Pfam" id="PF02568">
    <property type="entry name" value="ThiI"/>
    <property type="match status" value="1"/>
</dbReference>
<dbReference type="Pfam" id="PF22025">
    <property type="entry name" value="ThiI_fer"/>
    <property type="match status" value="1"/>
</dbReference>
<dbReference type="Pfam" id="PF02926">
    <property type="entry name" value="THUMP"/>
    <property type="match status" value="1"/>
</dbReference>
<dbReference type="SMART" id="SM00981">
    <property type="entry name" value="THUMP"/>
    <property type="match status" value="1"/>
</dbReference>
<dbReference type="SUPFAM" id="SSF52402">
    <property type="entry name" value="Adenine nucleotide alpha hydrolases-like"/>
    <property type="match status" value="1"/>
</dbReference>
<dbReference type="SUPFAM" id="SSF52821">
    <property type="entry name" value="Rhodanese/Cell cycle control phosphatase"/>
    <property type="match status" value="1"/>
</dbReference>
<dbReference type="SUPFAM" id="SSF143437">
    <property type="entry name" value="THUMP domain-like"/>
    <property type="match status" value="1"/>
</dbReference>
<dbReference type="PROSITE" id="PS50206">
    <property type="entry name" value="RHODANESE_3"/>
    <property type="match status" value="1"/>
</dbReference>
<dbReference type="PROSITE" id="PS51165">
    <property type="entry name" value="THUMP"/>
    <property type="match status" value="1"/>
</dbReference>
<name>THII_ECOSM</name>